<dbReference type="EC" id="2.7.1.39" evidence="1"/>
<dbReference type="EMBL" id="CP000919">
    <property type="protein sequence ID" value="ACO18260.1"/>
    <property type="molecule type" value="Genomic_DNA"/>
</dbReference>
<dbReference type="RefSeq" id="WP_000692438.1">
    <property type="nucleotide sequence ID" value="NC_012466.1"/>
</dbReference>
<dbReference type="SMR" id="C1CEU9"/>
<dbReference type="GeneID" id="45653380"/>
<dbReference type="KEGG" id="sjj:SPJ_1260"/>
<dbReference type="HOGENOM" id="CLU_041243_0_0_9"/>
<dbReference type="UniPathway" id="UPA00050">
    <property type="reaction ID" value="UER00064"/>
</dbReference>
<dbReference type="Proteomes" id="UP000002206">
    <property type="component" value="Chromosome"/>
</dbReference>
<dbReference type="GO" id="GO:0005737">
    <property type="term" value="C:cytoplasm"/>
    <property type="evidence" value="ECO:0007669"/>
    <property type="project" value="UniProtKB-SubCell"/>
</dbReference>
<dbReference type="GO" id="GO:0005524">
    <property type="term" value="F:ATP binding"/>
    <property type="evidence" value="ECO:0007669"/>
    <property type="project" value="UniProtKB-UniRule"/>
</dbReference>
<dbReference type="GO" id="GO:0004413">
    <property type="term" value="F:homoserine kinase activity"/>
    <property type="evidence" value="ECO:0007669"/>
    <property type="project" value="UniProtKB-UniRule"/>
</dbReference>
<dbReference type="GO" id="GO:0009088">
    <property type="term" value="P:threonine biosynthetic process"/>
    <property type="evidence" value="ECO:0007669"/>
    <property type="project" value="UniProtKB-UniRule"/>
</dbReference>
<dbReference type="Gene3D" id="3.30.230.10">
    <property type="match status" value="1"/>
</dbReference>
<dbReference type="Gene3D" id="3.30.70.890">
    <property type="entry name" value="GHMP kinase, C-terminal domain"/>
    <property type="match status" value="1"/>
</dbReference>
<dbReference type="HAMAP" id="MF_00384">
    <property type="entry name" value="Homoser_kinase"/>
    <property type="match status" value="1"/>
</dbReference>
<dbReference type="InterPro" id="IPR013750">
    <property type="entry name" value="GHMP_kinase_C_dom"/>
</dbReference>
<dbReference type="InterPro" id="IPR036554">
    <property type="entry name" value="GHMP_kinase_C_sf"/>
</dbReference>
<dbReference type="InterPro" id="IPR006204">
    <property type="entry name" value="GHMP_kinase_N_dom"/>
</dbReference>
<dbReference type="InterPro" id="IPR006203">
    <property type="entry name" value="GHMP_knse_ATP-bd_CS"/>
</dbReference>
<dbReference type="InterPro" id="IPR000870">
    <property type="entry name" value="Homoserine_kinase"/>
</dbReference>
<dbReference type="InterPro" id="IPR020568">
    <property type="entry name" value="Ribosomal_Su5_D2-typ_SF"/>
</dbReference>
<dbReference type="InterPro" id="IPR014721">
    <property type="entry name" value="Ribsml_uS5_D2-typ_fold_subgr"/>
</dbReference>
<dbReference type="NCBIfam" id="TIGR00191">
    <property type="entry name" value="thrB"/>
    <property type="match status" value="1"/>
</dbReference>
<dbReference type="PANTHER" id="PTHR20861:SF1">
    <property type="entry name" value="HOMOSERINE KINASE"/>
    <property type="match status" value="1"/>
</dbReference>
<dbReference type="PANTHER" id="PTHR20861">
    <property type="entry name" value="HOMOSERINE/4-DIPHOSPHOCYTIDYL-2-C-METHYL-D-ERYTHRITOL KINASE"/>
    <property type="match status" value="1"/>
</dbReference>
<dbReference type="Pfam" id="PF08544">
    <property type="entry name" value="GHMP_kinases_C"/>
    <property type="match status" value="1"/>
</dbReference>
<dbReference type="Pfam" id="PF00288">
    <property type="entry name" value="GHMP_kinases_N"/>
    <property type="match status" value="1"/>
</dbReference>
<dbReference type="PIRSF" id="PIRSF000676">
    <property type="entry name" value="Homoser_kin"/>
    <property type="match status" value="1"/>
</dbReference>
<dbReference type="PRINTS" id="PR00958">
    <property type="entry name" value="HOMSERKINASE"/>
</dbReference>
<dbReference type="SUPFAM" id="SSF55060">
    <property type="entry name" value="GHMP Kinase, C-terminal domain"/>
    <property type="match status" value="1"/>
</dbReference>
<dbReference type="SUPFAM" id="SSF54211">
    <property type="entry name" value="Ribosomal protein S5 domain 2-like"/>
    <property type="match status" value="1"/>
</dbReference>
<dbReference type="PROSITE" id="PS00627">
    <property type="entry name" value="GHMP_KINASES_ATP"/>
    <property type="match status" value="1"/>
</dbReference>
<gene>
    <name evidence="1" type="primary">thrB</name>
    <name type="ordered locus">SPJ_1260</name>
</gene>
<proteinExistence type="inferred from homology"/>
<reference key="1">
    <citation type="journal article" date="2010" name="Genome Biol.">
        <title>Structure and dynamics of the pan-genome of Streptococcus pneumoniae and closely related species.</title>
        <authorList>
            <person name="Donati C."/>
            <person name="Hiller N.L."/>
            <person name="Tettelin H."/>
            <person name="Muzzi A."/>
            <person name="Croucher N.J."/>
            <person name="Angiuoli S.V."/>
            <person name="Oggioni M."/>
            <person name="Dunning Hotopp J.C."/>
            <person name="Hu F.Z."/>
            <person name="Riley D.R."/>
            <person name="Covacci A."/>
            <person name="Mitchell T.J."/>
            <person name="Bentley S.D."/>
            <person name="Kilian M."/>
            <person name="Ehrlich G.D."/>
            <person name="Rappuoli R."/>
            <person name="Moxon E.R."/>
            <person name="Masignani V."/>
        </authorList>
    </citation>
    <scope>NUCLEOTIDE SEQUENCE [LARGE SCALE GENOMIC DNA]</scope>
    <source>
        <strain>JJA</strain>
    </source>
</reference>
<comment type="function">
    <text evidence="1">Catalyzes the ATP-dependent phosphorylation of L-homoserine to L-homoserine phosphate.</text>
</comment>
<comment type="catalytic activity">
    <reaction evidence="1">
        <text>L-homoserine + ATP = O-phospho-L-homoserine + ADP + H(+)</text>
        <dbReference type="Rhea" id="RHEA:13985"/>
        <dbReference type="ChEBI" id="CHEBI:15378"/>
        <dbReference type="ChEBI" id="CHEBI:30616"/>
        <dbReference type="ChEBI" id="CHEBI:57476"/>
        <dbReference type="ChEBI" id="CHEBI:57590"/>
        <dbReference type="ChEBI" id="CHEBI:456216"/>
        <dbReference type="EC" id="2.7.1.39"/>
    </reaction>
</comment>
<comment type="pathway">
    <text evidence="1">Amino-acid biosynthesis; L-threonine biosynthesis; L-threonine from L-aspartate: step 4/5.</text>
</comment>
<comment type="subcellular location">
    <subcellularLocation>
        <location evidence="1">Cytoplasm</location>
    </subcellularLocation>
</comment>
<comment type="similarity">
    <text evidence="1">Belongs to the GHMP kinase family. Homoserine kinase subfamily.</text>
</comment>
<name>KHSE_STRZJ</name>
<accession>C1CEU9</accession>
<protein>
    <recommendedName>
        <fullName evidence="1">Homoserine kinase</fullName>
        <shortName evidence="1">HK</shortName>
        <shortName evidence="1">HSK</shortName>
        <ecNumber evidence="1">2.7.1.39</ecNumber>
    </recommendedName>
</protein>
<feature type="chain" id="PRO_1000134265" description="Homoserine kinase">
    <location>
        <begin position="1"/>
        <end position="289"/>
    </location>
</feature>
<feature type="binding site" evidence="1">
    <location>
        <begin position="79"/>
        <end position="89"/>
    </location>
    <ligand>
        <name>ATP</name>
        <dbReference type="ChEBI" id="CHEBI:30616"/>
    </ligand>
</feature>
<organism>
    <name type="scientific">Streptococcus pneumoniae (strain JJA)</name>
    <dbReference type="NCBI Taxonomy" id="488222"/>
    <lineage>
        <taxon>Bacteria</taxon>
        <taxon>Bacillati</taxon>
        <taxon>Bacillota</taxon>
        <taxon>Bacilli</taxon>
        <taxon>Lactobacillales</taxon>
        <taxon>Streptococcaceae</taxon>
        <taxon>Streptococcus</taxon>
    </lineage>
</organism>
<keyword id="KW-0028">Amino-acid biosynthesis</keyword>
<keyword id="KW-0067">ATP-binding</keyword>
<keyword id="KW-0963">Cytoplasm</keyword>
<keyword id="KW-0418">Kinase</keyword>
<keyword id="KW-0547">Nucleotide-binding</keyword>
<keyword id="KW-0791">Threonine biosynthesis</keyword>
<keyword id="KW-0808">Transferase</keyword>
<evidence type="ECO:0000255" key="1">
    <source>
        <dbReference type="HAMAP-Rule" id="MF_00384"/>
    </source>
</evidence>
<sequence>MKIIVPATSANIGPGFDSVGVAVTKYLQIEVCEERDEWLIEHQIGKWIPHDERNLLLKIALQIVPDLQPRRLKMTSDVPLARGLGSSSSVIVAGIELANQLGQLNLSDHEKLQLATKIEGHPDNVAPAIYGNLVIASSVEGQVSAIVADFPECDFLAYIPNYELRTRDSRSVLPKKLSYKEAVAASSIANVAVAALLAGDMVTAGQAIEGDLFHERYRQDLVREFAMIKQVTKENGAYATYLSGAGPTVMVLASHDKMPTIKAELEKQPFKGKLHDLRVDTQGVRVEAK</sequence>